<dbReference type="EC" id="3.4.11.4" evidence="1"/>
<dbReference type="EMBL" id="AE005174">
    <property type="protein sequence ID" value="AAG55931.1"/>
    <property type="molecule type" value="Genomic_DNA"/>
</dbReference>
<dbReference type="EMBL" id="BA000007">
    <property type="protein sequence ID" value="BAB34995.1"/>
    <property type="molecule type" value="Genomic_DNA"/>
</dbReference>
<dbReference type="PIR" id="D90825">
    <property type="entry name" value="D90825"/>
</dbReference>
<dbReference type="PIR" id="G85683">
    <property type="entry name" value="G85683"/>
</dbReference>
<dbReference type="RefSeq" id="NP_309599.1">
    <property type="nucleotide sequence ID" value="NC_002695.1"/>
</dbReference>
<dbReference type="RefSeq" id="WP_000359446.1">
    <property type="nucleotide sequence ID" value="NZ_VOAI01000035.1"/>
</dbReference>
<dbReference type="SMR" id="P65804"/>
<dbReference type="STRING" id="155864.Z1832"/>
<dbReference type="MEROPS" id="M20.003"/>
<dbReference type="GeneID" id="913326"/>
<dbReference type="GeneID" id="93776283"/>
<dbReference type="KEGG" id="ece:Z1832"/>
<dbReference type="KEGG" id="ecs:ECs_1572"/>
<dbReference type="PATRIC" id="fig|386585.9.peg.1673"/>
<dbReference type="eggNOG" id="COG2195">
    <property type="taxonomic scope" value="Bacteria"/>
</dbReference>
<dbReference type="HOGENOM" id="CLU_053676_0_0_6"/>
<dbReference type="Proteomes" id="UP000000558">
    <property type="component" value="Chromosome"/>
</dbReference>
<dbReference type="Proteomes" id="UP000002519">
    <property type="component" value="Chromosome"/>
</dbReference>
<dbReference type="GO" id="GO:0005829">
    <property type="term" value="C:cytosol"/>
    <property type="evidence" value="ECO:0007669"/>
    <property type="project" value="TreeGrafter"/>
</dbReference>
<dbReference type="GO" id="GO:0008237">
    <property type="term" value="F:metallopeptidase activity"/>
    <property type="evidence" value="ECO:0007669"/>
    <property type="project" value="UniProtKB-KW"/>
</dbReference>
<dbReference type="GO" id="GO:0045148">
    <property type="term" value="F:tripeptide aminopeptidase activity"/>
    <property type="evidence" value="ECO:0007669"/>
    <property type="project" value="UniProtKB-UniRule"/>
</dbReference>
<dbReference type="GO" id="GO:0008270">
    <property type="term" value="F:zinc ion binding"/>
    <property type="evidence" value="ECO:0007669"/>
    <property type="project" value="UniProtKB-UniRule"/>
</dbReference>
<dbReference type="GO" id="GO:0043171">
    <property type="term" value="P:peptide catabolic process"/>
    <property type="evidence" value="ECO:0007669"/>
    <property type="project" value="UniProtKB-UniRule"/>
</dbReference>
<dbReference type="GO" id="GO:0006508">
    <property type="term" value="P:proteolysis"/>
    <property type="evidence" value="ECO:0007669"/>
    <property type="project" value="UniProtKB-UniRule"/>
</dbReference>
<dbReference type="CDD" id="cd03892">
    <property type="entry name" value="M20_peptT"/>
    <property type="match status" value="1"/>
</dbReference>
<dbReference type="FunFam" id="3.30.70.360:FF:000002">
    <property type="entry name" value="Peptidase T"/>
    <property type="match status" value="1"/>
</dbReference>
<dbReference type="Gene3D" id="3.30.70.360">
    <property type="match status" value="1"/>
</dbReference>
<dbReference type="Gene3D" id="3.40.630.10">
    <property type="entry name" value="Zn peptidases"/>
    <property type="match status" value="1"/>
</dbReference>
<dbReference type="HAMAP" id="MF_00550">
    <property type="entry name" value="Aminopeptidase_M20"/>
    <property type="match status" value="1"/>
</dbReference>
<dbReference type="InterPro" id="IPR001261">
    <property type="entry name" value="ArgE/DapE_CS"/>
</dbReference>
<dbReference type="InterPro" id="IPR036264">
    <property type="entry name" value="Bact_exopeptidase_dim_dom"/>
</dbReference>
<dbReference type="InterPro" id="IPR002933">
    <property type="entry name" value="Peptidase_M20"/>
</dbReference>
<dbReference type="InterPro" id="IPR011650">
    <property type="entry name" value="Peptidase_M20_dimer"/>
</dbReference>
<dbReference type="InterPro" id="IPR010161">
    <property type="entry name" value="Peptidase_M20B"/>
</dbReference>
<dbReference type="NCBIfam" id="TIGR01882">
    <property type="entry name" value="peptidase-T"/>
    <property type="match status" value="1"/>
</dbReference>
<dbReference type="NCBIfam" id="NF003976">
    <property type="entry name" value="PRK05469.1"/>
    <property type="match status" value="1"/>
</dbReference>
<dbReference type="NCBIfam" id="NF009920">
    <property type="entry name" value="PRK13381.1"/>
    <property type="match status" value="1"/>
</dbReference>
<dbReference type="PANTHER" id="PTHR42994">
    <property type="entry name" value="PEPTIDASE T"/>
    <property type="match status" value="1"/>
</dbReference>
<dbReference type="PANTHER" id="PTHR42994:SF1">
    <property type="entry name" value="PEPTIDASE T"/>
    <property type="match status" value="1"/>
</dbReference>
<dbReference type="Pfam" id="PF07687">
    <property type="entry name" value="M20_dimer"/>
    <property type="match status" value="1"/>
</dbReference>
<dbReference type="Pfam" id="PF01546">
    <property type="entry name" value="Peptidase_M20"/>
    <property type="match status" value="1"/>
</dbReference>
<dbReference type="PIRSF" id="PIRSF037215">
    <property type="entry name" value="Peptidase_M20B"/>
    <property type="match status" value="1"/>
</dbReference>
<dbReference type="SUPFAM" id="SSF55031">
    <property type="entry name" value="Bacterial exopeptidase dimerisation domain"/>
    <property type="match status" value="1"/>
</dbReference>
<dbReference type="SUPFAM" id="SSF53187">
    <property type="entry name" value="Zn-dependent exopeptidases"/>
    <property type="match status" value="1"/>
</dbReference>
<dbReference type="PROSITE" id="PS00758">
    <property type="entry name" value="ARGE_DAPE_CPG2_1"/>
    <property type="match status" value="1"/>
</dbReference>
<dbReference type="PROSITE" id="PS00759">
    <property type="entry name" value="ARGE_DAPE_CPG2_2"/>
    <property type="match status" value="1"/>
</dbReference>
<accession>P65804</accession>
<accession>Q8X777</accession>
<proteinExistence type="inferred from homology"/>
<name>PEPT_ECO57</name>
<comment type="function">
    <text evidence="1">Cleaves the N-terminal amino acid of tripeptides.</text>
</comment>
<comment type="catalytic activity">
    <reaction evidence="1">
        <text>Release of the N-terminal residue from a tripeptide.</text>
        <dbReference type="EC" id="3.4.11.4"/>
    </reaction>
</comment>
<comment type="cofactor">
    <cofactor evidence="1">
        <name>Zn(2+)</name>
        <dbReference type="ChEBI" id="CHEBI:29105"/>
    </cofactor>
    <text evidence="1">Binds 2 Zn(2+) ions per subunit.</text>
</comment>
<comment type="subcellular location">
    <subcellularLocation>
        <location evidence="1">Cytoplasm</location>
    </subcellularLocation>
</comment>
<comment type="similarity">
    <text evidence="1">Belongs to the peptidase M20B family.</text>
</comment>
<evidence type="ECO:0000255" key="1">
    <source>
        <dbReference type="HAMAP-Rule" id="MF_00550"/>
    </source>
</evidence>
<protein>
    <recommendedName>
        <fullName evidence="1">Peptidase T</fullName>
        <ecNumber evidence="1">3.4.11.4</ecNumber>
    </recommendedName>
    <alternativeName>
        <fullName evidence="1">Aminotripeptidase</fullName>
        <shortName evidence="1">Tripeptidase</shortName>
    </alternativeName>
    <alternativeName>
        <fullName evidence="1">Tripeptide aminopeptidase</fullName>
    </alternativeName>
</protein>
<reference key="1">
    <citation type="journal article" date="2001" name="Nature">
        <title>Genome sequence of enterohaemorrhagic Escherichia coli O157:H7.</title>
        <authorList>
            <person name="Perna N.T."/>
            <person name="Plunkett G. III"/>
            <person name="Burland V."/>
            <person name="Mau B."/>
            <person name="Glasner J.D."/>
            <person name="Rose D.J."/>
            <person name="Mayhew G.F."/>
            <person name="Evans P.S."/>
            <person name="Gregor J."/>
            <person name="Kirkpatrick H.A."/>
            <person name="Posfai G."/>
            <person name="Hackett J."/>
            <person name="Klink S."/>
            <person name="Boutin A."/>
            <person name="Shao Y."/>
            <person name="Miller L."/>
            <person name="Grotbeck E.J."/>
            <person name="Davis N.W."/>
            <person name="Lim A."/>
            <person name="Dimalanta E.T."/>
            <person name="Potamousis K."/>
            <person name="Apodaca J."/>
            <person name="Anantharaman T.S."/>
            <person name="Lin J."/>
            <person name="Yen G."/>
            <person name="Schwartz D.C."/>
            <person name="Welch R.A."/>
            <person name="Blattner F.R."/>
        </authorList>
    </citation>
    <scope>NUCLEOTIDE SEQUENCE [LARGE SCALE GENOMIC DNA]</scope>
    <source>
        <strain>O157:H7 / EDL933 / ATCC 700927 / EHEC</strain>
    </source>
</reference>
<reference key="2">
    <citation type="journal article" date="2001" name="DNA Res.">
        <title>Complete genome sequence of enterohemorrhagic Escherichia coli O157:H7 and genomic comparison with a laboratory strain K-12.</title>
        <authorList>
            <person name="Hayashi T."/>
            <person name="Makino K."/>
            <person name="Ohnishi M."/>
            <person name="Kurokawa K."/>
            <person name="Ishii K."/>
            <person name="Yokoyama K."/>
            <person name="Han C.-G."/>
            <person name="Ohtsubo E."/>
            <person name="Nakayama K."/>
            <person name="Murata T."/>
            <person name="Tanaka M."/>
            <person name="Tobe T."/>
            <person name="Iida T."/>
            <person name="Takami H."/>
            <person name="Honda T."/>
            <person name="Sasakawa C."/>
            <person name="Ogasawara N."/>
            <person name="Yasunaga T."/>
            <person name="Kuhara S."/>
            <person name="Shiba T."/>
            <person name="Hattori M."/>
            <person name="Shinagawa H."/>
        </authorList>
    </citation>
    <scope>NUCLEOTIDE SEQUENCE [LARGE SCALE GENOMIC DNA]</scope>
    <source>
        <strain>O157:H7 / Sakai / RIMD 0509952 / EHEC</strain>
    </source>
</reference>
<feature type="chain" id="PRO_0000185293" description="Peptidase T">
    <location>
        <begin position="1"/>
        <end position="408"/>
    </location>
</feature>
<feature type="active site" evidence="1">
    <location>
        <position position="80"/>
    </location>
</feature>
<feature type="active site" description="Proton acceptor" evidence="1">
    <location>
        <position position="173"/>
    </location>
</feature>
<feature type="binding site" evidence="1">
    <location>
        <position position="78"/>
    </location>
    <ligand>
        <name>Zn(2+)</name>
        <dbReference type="ChEBI" id="CHEBI:29105"/>
        <label>1</label>
    </ligand>
</feature>
<feature type="binding site" evidence="1">
    <location>
        <position position="140"/>
    </location>
    <ligand>
        <name>Zn(2+)</name>
        <dbReference type="ChEBI" id="CHEBI:29105"/>
        <label>1</label>
    </ligand>
</feature>
<feature type="binding site" evidence="1">
    <location>
        <position position="140"/>
    </location>
    <ligand>
        <name>Zn(2+)</name>
        <dbReference type="ChEBI" id="CHEBI:29105"/>
        <label>2</label>
    </ligand>
</feature>
<feature type="binding site" evidence="1">
    <location>
        <position position="174"/>
    </location>
    <ligand>
        <name>Zn(2+)</name>
        <dbReference type="ChEBI" id="CHEBI:29105"/>
        <label>2</label>
    </ligand>
</feature>
<feature type="binding site" evidence="1">
    <location>
        <position position="196"/>
    </location>
    <ligand>
        <name>Zn(2+)</name>
        <dbReference type="ChEBI" id="CHEBI:29105"/>
        <label>1</label>
    </ligand>
</feature>
<feature type="binding site" evidence="1">
    <location>
        <position position="379"/>
    </location>
    <ligand>
        <name>Zn(2+)</name>
        <dbReference type="ChEBI" id="CHEBI:29105"/>
        <label>2</label>
    </ligand>
</feature>
<sequence length="408" mass="44909">MDKLLERFLNYVSLDTQSKAGVRQVPSTEGQWKLLHLLKEQLEEMGLINVTLSEKGTLMATLPANVPGDIPAIGFISHVDTSPDCSGKNVNPQIVENYRGGDIALGIGDEVLSPVMFPVLHQLLGQTLITTDGKTLLGADDKAGIAEIMTALAVLQQKNIPHGDIRVAFTPDEEVGKGAKHFDVDAFDARWAYTVDGGGVGELEFENFNAASVNIKIVGNNVHPGTAKGVMVNALSLAARIHAEVPADESPEMTEGYEGFYHLASMKGTVERADMHYIIRDFDRKQFEARKRKMMEIAKKVGKGLHPDCYIELVIEDSYYNMREKVVEHPHILDIAQQAMRDCDIEPELKPIRGGTDGAQLSFMGLPCPNLFTGGYNYHGKHEFVTLEGMEKAVQVIVRIAELTAQRK</sequence>
<organism>
    <name type="scientific">Escherichia coli O157:H7</name>
    <dbReference type="NCBI Taxonomy" id="83334"/>
    <lineage>
        <taxon>Bacteria</taxon>
        <taxon>Pseudomonadati</taxon>
        <taxon>Pseudomonadota</taxon>
        <taxon>Gammaproteobacteria</taxon>
        <taxon>Enterobacterales</taxon>
        <taxon>Enterobacteriaceae</taxon>
        <taxon>Escherichia</taxon>
    </lineage>
</organism>
<keyword id="KW-0031">Aminopeptidase</keyword>
<keyword id="KW-0963">Cytoplasm</keyword>
<keyword id="KW-0378">Hydrolase</keyword>
<keyword id="KW-0479">Metal-binding</keyword>
<keyword id="KW-0482">Metalloprotease</keyword>
<keyword id="KW-0645">Protease</keyword>
<keyword id="KW-1185">Reference proteome</keyword>
<keyword id="KW-0862">Zinc</keyword>
<gene>
    <name evidence="1" type="primary">pepT</name>
    <name type="ordered locus">Z1832</name>
    <name type="ordered locus">ECs1572</name>
</gene>